<dbReference type="EC" id="5.4.99.5" evidence="1"/>
<dbReference type="EMBL" id="LT708304">
    <property type="protein sequence ID" value="SIT99571.1"/>
    <property type="molecule type" value="Genomic_DNA"/>
</dbReference>
<dbReference type="RefSeq" id="NP_854630.1">
    <property type="nucleotide sequence ID" value="NC_002945.3"/>
</dbReference>
<dbReference type="RefSeq" id="WP_003404838.1">
    <property type="nucleotide sequence ID" value="NC_002945.4"/>
</dbReference>
<dbReference type="SMR" id="P64768"/>
<dbReference type="KEGG" id="mbo:BQ2027_MB0973C"/>
<dbReference type="PATRIC" id="fig|233413.5.peg.1059"/>
<dbReference type="UniPathway" id="UPA00120">
    <property type="reaction ID" value="UER00203"/>
</dbReference>
<dbReference type="Proteomes" id="UP000001419">
    <property type="component" value="Chromosome"/>
</dbReference>
<dbReference type="GO" id="GO:0005737">
    <property type="term" value="C:cytoplasm"/>
    <property type="evidence" value="ECO:0007669"/>
    <property type="project" value="UniProtKB-SubCell"/>
</dbReference>
<dbReference type="GO" id="GO:0004106">
    <property type="term" value="F:chorismate mutase activity"/>
    <property type="evidence" value="ECO:0007669"/>
    <property type="project" value="InterPro"/>
</dbReference>
<dbReference type="GO" id="GO:0008652">
    <property type="term" value="P:amino acid biosynthetic process"/>
    <property type="evidence" value="ECO:0007669"/>
    <property type="project" value="UniProtKB-KW"/>
</dbReference>
<dbReference type="GO" id="GO:0009073">
    <property type="term" value="P:aromatic amino acid family biosynthetic process"/>
    <property type="evidence" value="ECO:0007669"/>
    <property type="project" value="UniProtKB-KW"/>
</dbReference>
<dbReference type="GO" id="GO:0046417">
    <property type="term" value="P:chorismate metabolic process"/>
    <property type="evidence" value="ECO:0007669"/>
    <property type="project" value="InterPro"/>
</dbReference>
<dbReference type="GO" id="GO:0009697">
    <property type="term" value="P:salicylic acid biosynthetic process"/>
    <property type="evidence" value="ECO:0007669"/>
    <property type="project" value="TreeGrafter"/>
</dbReference>
<dbReference type="FunFam" id="1.20.59.10:FF:000009">
    <property type="entry name" value="Intracellular chorismate mutase"/>
    <property type="match status" value="1"/>
</dbReference>
<dbReference type="Gene3D" id="1.20.59.10">
    <property type="entry name" value="Chorismate mutase"/>
    <property type="match status" value="1"/>
</dbReference>
<dbReference type="InterPro" id="IPR036263">
    <property type="entry name" value="Chorismate_II_sf"/>
</dbReference>
<dbReference type="InterPro" id="IPR051331">
    <property type="entry name" value="Chorismate_mutase-related"/>
</dbReference>
<dbReference type="InterPro" id="IPR010958">
    <property type="entry name" value="Chorismate_mutase_highGC-bac"/>
</dbReference>
<dbReference type="InterPro" id="IPR036979">
    <property type="entry name" value="CM_dom_sf"/>
</dbReference>
<dbReference type="InterPro" id="IPR002701">
    <property type="entry name" value="CM_II_prokaryot"/>
</dbReference>
<dbReference type="NCBIfam" id="TIGR01808">
    <property type="entry name" value="CM_M_hiGC-arch"/>
    <property type="match status" value="1"/>
</dbReference>
<dbReference type="NCBIfam" id="NF005894">
    <property type="entry name" value="PRK07857.1"/>
    <property type="match status" value="1"/>
</dbReference>
<dbReference type="PANTHER" id="PTHR38041">
    <property type="entry name" value="CHORISMATE MUTASE"/>
    <property type="match status" value="1"/>
</dbReference>
<dbReference type="PANTHER" id="PTHR38041:SF1">
    <property type="entry name" value="CHORISMATE MUTASE"/>
    <property type="match status" value="1"/>
</dbReference>
<dbReference type="Pfam" id="PF01817">
    <property type="entry name" value="CM_2"/>
    <property type="match status" value="1"/>
</dbReference>
<dbReference type="SMART" id="SM00830">
    <property type="entry name" value="CM_2"/>
    <property type="match status" value="1"/>
</dbReference>
<dbReference type="SUPFAM" id="SSF48600">
    <property type="entry name" value="Chorismate mutase II"/>
    <property type="match status" value="1"/>
</dbReference>
<dbReference type="PROSITE" id="PS51168">
    <property type="entry name" value="CHORISMATE_MUT_2"/>
    <property type="match status" value="1"/>
</dbReference>
<proteinExistence type="inferred from homology"/>
<name>CHMU_MYCBO</name>
<reference key="1">
    <citation type="journal article" date="2003" name="Proc. Natl. Acad. Sci. U.S.A.">
        <title>The complete genome sequence of Mycobacterium bovis.</title>
        <authorList>
            <person name="Garnier T."/>
            <person name="Eiglmeier K."/>
            <person name="Camus J.-C."/>
            <person name="Medina N."/>
            <person name="Mansoor H."/>
            <person name="Pryor M."/>
            <person name="Duthoy S."/>
            <person name="Grondin S."/>
            <person name="Lacroix C."/>
            <person name="Monsempe C."/>
            <person name="Simon S."/>
            <person name="Harris B."/>
            <person name="Atkin R."/>
            <person name="Doggett J."/>
            <person name="Mayes R."/>
            <person name="Keating L."/>
            <person name="Wheeler P.R."/>
            <person name="Parkhill J."/>
            <person name="Barrell B.G."/>
            <person name="Cole S.T."/>
            <person name="Gordon S.V."/>
            <person name="Hewinson R.G."/>
        </authorList>
    </citation>
    <scope>NUCLEOTIDE SEQUENCE [LARGE SCALE GENOMIC DNA]</scope>
    <source>
        <strain>ATCC BAA-935 / AF2122/97</strain>
    </source>
</reference>
<reference key="2">
    <citation type="journal article" date="2017" name="Genome Announc.">
        <title>Updated reference genome sequence and annotation of Mycobacterium bovis AF2122/97.</title>
        <authorList>
            <person name="Malone K.M."/>
            <person name="Farrell D."/>
            <person name="Stuber T.P."/>
            <person name="Schubert O.T."/>
            <person name="Aebersold R."/>
            <person name="Robbe-Austerman S."/>
            <person name="Gordon S.V."/>
        </authorList>
    </citation>
    <scope>NUCLEOTIDE SEQUENCE [LARGE SCALE GENOMIC DNA]</scope>
    <scope>GENOME REANNOTATION</scope>
    <source>
        <strain>ATCC BAA-935 / AF2122/97</strain>
    </source>
</reference>
<keyword id="KW-0028">Amino-acid biosynthesis</keyword>
<keyword id="KW-0057">Aromatic amino acid biosynthesis</keyword>
<keyword id="KW-0963">Cytoplasm</keyword>
<keyword id="KW-0413">Isomerase</keyword>
<keyword id="KW-1185">Reference proteome</keyword>
<gene>
    <name type="ordered locus">BQ2027_MB0973C</name>
</gene>
<evidence type="ECO:0000250" key="1">
    <source>
        <dbReference type="UniProtKB" id="P9WIC1"/>
    </source>
</evidence>
<evidence type="ECO:0000255" key="2">
    <source>
        <dbReference type="PROSITE-ProRule" id="PRU00515"/>
    </source>
</evidence>
<organism>
    <name type="scientific">Mycobacterium bovis (strain ATCC BAA-935 / AF2122/97)</name>
    <dbReference type="NCBI Taxonomy" id="233413"/>
    <lineage>
        <taxon>Bacteria</taxon>
        <taxon>Bacillati</taxon>
        <taxon>Actinomycetota</taxon>
        <taxon>Actinomycetes</taxon>
        <taxon>Mycobacteriales</taxon>
        <taxon>Mycobacteriaceae</taxon>
        <taxon>Mycobacterium</taxon>
        <taxon>Mycobacterium tuberculosis complex</taxon>
    </lineage>
</organism>
<sequence>MRPEPPHHENAELAAMNLEMLESQPVPEIDTLREEIDRLDAEILALVKRRAEVSKAIGKARMASGGTRLVHSREMKVIERYSELGPDGKDLAILLLRLGRGRLGH</sequence>
<comment type="function">
    <text evidence="1">Catalyzes the Claisen rearrangement of chorismate to prephenate. Probably involved in the aromatic amino acid biosynthesis.</text>
</comment>
<comment type="catalytic activity">
    <reaction evidence="1">
        <text>chorismate = prephenate</text>
        <dbReference type="Rhea" id="RHEA:13897"/>
        <dbReference type="ChEBI" id="CHEBI:29748"/>
        <dbReference type="ChEBI" id="CHEBI:29934"/>
        <dbReference type="EC" id="5.4.99.5"/>
    </reaction>
</comment>
<comment type="activity regulation">
    <text evidence="1">The formation of the complex with AroG activates the chorismate mutase activity.</text>
</comment>
<comment type="pathway">
    <text evidence="1">Metabolic intermediate biosynthesis; prephenate biosynthesis; prephenate from chorismate: step 1/1.</text>
</comment>
<comment type="subunit">
    <text evidence="1">Homodimer. Interacts with AroG.</text>
</comment>
<comment type="subcellular location">
    <subcellularLocation>
        <location evidence="1">Cytoplasm</location>
    </subcellularLocation>
</comment>
<accession>P64768</accession>
<accession>A0A1R3XWX0</accession>
<accession>P71562</accession>
<accession>X2BGA2</accession>
<feature type="chain" id="PRO_0000119201" description="Intracellular chorismate mutase">
    <location>
        <begin position="1"/>
        <end position="105"/>
    </location>
</feature>
<feature type="domain" description="Chorismate mutase" evidence="2">
    <location>
        <begin position="23"/>
        <end position="105"/>
    </location>
</feature>
<feature type="binding site" evidence="1">
    <location>
        <position position="61"/>
    </location>
    <ligand>
        <name>chorismate</name>
        <dbReference type="ChEBI" id="CHEBI:29748"/>
    </ligand>
</feature>
<feature type="binding site" evidence="1">
    <location>
        <position position="70"/>
    </location>
    <ligand>
        <name>chorismate</name>
        <dbReference type="ChEBI" id="CHEBI:29748"/>
    </ligand>
</feature>
<feature type="binding site" evidence="1">
    <location>
        <position position="74"/>
    </location>
    <ligand>
        <name>chorismate</name>
        <dbReference type="ChEBI" id="CHEBI:29748"/>
    </ligand>
</feature>
<feature type="site" description="Important for catalysis" evidence="1">
    <location>
        <position position="61"/>
    </location>
</feature>
<feature type="site" description="Important for activation via AroG" evidence="1">
    <location>
        <position position="101"/>
    </location>
</feature>
<feature type="site" description="Important for activation via AroG" evidence="1">
    <location>
        <position position="102"/>
    </location>
</feature>
<feature type="site" description="Important for activation via AroG" evidence="1">
    <location>
        <position position="103"/>
    </location>
</feature>
<protein>
    <recommendedName>
        <fullName evidence="1">Intracellular chorismate mutase</fullName>
        <shortName evidence="1">CM</shortName>
        <ecNumber evidence="1">5.4.99.5</ecNumber>
    </recommendedName>
</protein>